<sequence length="379" mass="42898">MTIMRKTHPLMKMVNHAFIDLPTPSNISGWWNFGSLLGLCLIIQIASGLFLAMHYTPDTLTAFSSVTHICRDVNYGWLIRYIHANGASLFFICLYLHIGRGIYYGSYSYVETWNIGIILLLLTMATAFMGYVLPWGQMSFWGATVITNLLSAIPYIGTDLVEWIWGGFSVDKATLNRFFAFHFILPFIIAAMAMVHLLFLHETGSNNPLGIPSDCDKIPFHPYYTTKDFLGIVLLLAFFFTLVLFFPDLLGDPDNYSPANPLNTPPHIKPEWYFLFAYAILRSIPNKLGGVIALLMSILILALLPHIQTAKQRSLMFRPISQFLFWLLVSDVLVLTWIGGQPVEPPFIIIGQIASFLYFAIILILMPIAGIIENKMLKW</sequence>
<keyword id="KW-0249">Electron transport</keyword>
<keyword id="KW-0349">Heme</keyword>
<keyword id="KW-0408">Iron</keyword>
<keyword id="KW-0472">Membrane</keyword>
<keyword id="KW-0479">Metal-binding</keyword>
<keyword id="KW-0496">Mitochondrion</keyword>
<keyword id="KW-0999">Mitochondrion inner membrane</keyword>
<keyword id="KW-0679">Respiratory chain</keyword>
<keyword id="KW-0812">Transmembrane</keyword>
<keyword id="KW-1133">Transmembrane helix</keyword>
<keyword id="KW-0813">Transport</keyword>
<keyword id="KW-0830">Ubiquinone</keyword>
<gene>
    <name type="primary">MT-CYB</name>
    <name type="synonym">COB</name>
    <name type="synonym">CYTB</name>
    <name type="synonym">MTCYB</name>
</gene>
<organism>
    <name type="scientific">Dipodomys stephensi</name>
    <name type="common">Stephens's kangaroo rat</name>
    <dbReference type="NCBI Taxonomy" id="323379"/>
    <lineage>
        <taxon>Eukaryota</taxon>
        <taxon>Metazoa</taxon>
        <taxon>Chordata</taxon>
        <taxon>Craniata</taxon>
        <taxon>Vertebrata</taxon>
        <taxon>Euteleostomi</taxon>
        <taxon>Mammalia</taxon>
        <taxon>Eutheria</taxon>
        <taxon>Euarchontoglires</taxon>
        <taxon>Glires</taxon>
        <taxon>Rodentia</taxon>
        <taxon>Castorimorpha</taxon>
        <taxon>Heteromyidae</taxon>
        <taxon>Dipodomyinae</taxon>
        <taxon>Dipodomys</taxon>
    </lineage>
</organism>
<geneLocation type="mitochondrion"/>
<reference key="1">
    <citation type="journal article" date="2005" name="J. Mammal.">
        <title>Phylogenetics of the new world rodent family Heteromyidae.</title>
        <authorList>
            <person name="Alexander L.F."/>
            <person name="Riddle B.R."/>
        </authorList>
    </citation>
    <scope>NUCLEOTIDE SEQUENCE [GENOMIC DNA]</scope>
    <source>
        <strain>Isolate LVT 2061</strain>
    </source>
</reference>
<protein>
    <recommendedName>
        <fullName>Cytochrome b</fullName>
    </recommendedName>
    <alternativeName>
        <fullName>Complex III subunit 3</fullName>
    </alternativeName>
    <alternativeName>
        <fullName>Complex III subunit III</fullName>
    </alternativeName>
    <alternativeName>
        <fullName>Cytochrome b-c1 complex subunit 3</fullName>
    </alternativeName>
    <alternativeName>
        <fullName>Ubiquinol-cytochrome-c reductase complex cytochrome b subunit</fullName>
    </alternativeName>
</protein>
<feature type="chain" id="PRO_0000255046" description="Cytochrome b">
    <location>
        <begin position="1"/>
        <end position="379"/>
    </location>
</feature>
<feature type="transmembrane region" description="Helical" evidence="2">
    <location>
        <begin position="33"/>
        <end position="53"/>
    </location>
</feature>
<feature type="transmembrane region" description="Helical" evidence="2">
    <location>
        <begin position="77"/>
        <end position="98"/>
    </location>
</feature>
<feature type="transmembrane region" description="Helical" evidence="2">
    <location>
        <begin position="113"/>
        <end position="133"/>
    </location>
</feature>
<feature type="transmembrane region" description="Helical" evidence="2">
    <location>
        <begin position="178"/>
        <end position="198"/>
    </location>
</feature>
<feature type="transmembrane region" description="Helical" evidence="2">
    <location>
        <begin position="226"/>
        <end position="246"/>
    </location>
</feature>
<feature type="transmembrane region" description="Helical" evidence="2">
    <location>
        <begin position="288"/>
        <end position="308"/>
    </location>
</feature>
<feature type="transmembrane region" description="Helical" evidence="2">
    <location>
        <begin position="320"/>
        <end position="340"/>
    </location>
</feature>
<feature type="transmembrane region" description="Helical" evidence="2">
    <location>
        <begin position="347"/>
        <end position="367"/>
    </location>
</feature>
<feature type="binding site" description="axial binding residue" evidence="2">
    <location>
        <position position="83"/>
    </location>
    <ligand>
        <name>heme b</name>
        <dbReference type="ChEBI" id="CHEBI:60344"/>
        <label>b562</label>
    </ligand>
    <ligandPart>
        <name>Fe</name>
        <dbReference type="ChEBI" id="CHEBI:18248"/>
    </ligandPart>
</feature>
<feature type="binding site" description="axial binding residue" evidence="2">
    <location>
        <position position="97"/>
    </location>
    <ligand>
        <name>heme b</name>
        <dbReference type="ChEBI" id="CHEBI:60344"/>
        <label>b566</label>
    </ligand>
    <ligandPart>
        <name>Fe</name>
        <dbReference type="ChEBI" id="CHEBI:18248"/>
    </ligandPart>
</feature>
<feature type="binding site" description="axial binding residue" evidence="2">
    <location>
        <position position="182"/>
    </location>
    <ligand>
        <name>heme b</name>
        <dbReference type="ChEBI" id="CHEBI:60344"/>
        <label>b562</label>
    </ligand>
    <ligandPart>
        <name>Fe</name>
        <dbReference type="ChEBI" id="CHEBI:18248"/>
    </ligandPart>
</feature>
<feature type="binding site" description="axial binding residue" evidence="2">
    <location>
        <position position="196"/>
    </location>
    <ligand>
        <name>heme b</name>
        <dbReference type="ChEBI" id="CHEBI:60344"/>
        <label>b566</label>
    </ligand>
    <ligandPart>
        <name>Fe</name>
        <dbReference type="ChEBI" id="CHEBI:18248"/>
    </ligandPart>
</feature>
<feature type="binding site" evidence="2">
    <location>
        <position position="201"/>
    </location>
    <ligand>
        <name>a ubiquinone</name>
        <dbReference type="ChEBI" id="CHEBI:16389"/>
    </ligand>
</feature>
<comment type="function">
    <text evidence="2">Component of the ubiquinol-cytochrome c reductase complex (complex III or cytochrome b-c1 complex) that is part of the mitochondrial respiratory chain. The b-c1 complex mediates electron transfer from ubiquinol to cytochrome c. Contributes to the generation of a proton gradient across the mitochondrial membrane that is then used for ATP synthesis.</text>
</comment>
<comment type="cofactor">
    <cofactor evidence="2">
        <name>heme b</name>
        <dbReference type="ChEBI" id="CHEBI:60344"/>
    </cofactor>
    <text evidence="2">Binds 2 heme b groups non-covalently.</text>
</comment>
<comment type="subunit">
    <text evidence="2">The cytochrome bc1 complex contains 11 subunits: 3 respiratory subunits (MT-CYB, CYC1 and UQCRFS1), 2 core proteins (UQCRC1 and UQCRC2) and 6 low-molecular weight proteins (UQCRH/QCR6, UQCRB/QCR7, UQCRQ/QCR8, UQCR10/QCR9, UQCR11/QCR10 and a cleavage product of UQCRFS1). This cytochrome bc1 complex then forms a dimer.</text>
</comment>
<comment type="subcellular location">
    <subcellularLocation>
        <location evidence="2">Mitochondrion inner membrane</location>
        <topology evidence="2">Multi-pass membrane protein</topology>
    </subcellularLocation>
</comment>
<comment type="miscellaneous">
    <text evidence="1">Heme 1 (or BL or b562) is low-potential and absorbs at about 562 nm, and heme 2 (or BH or b566) is high-potential and absorbs at about 566 nm.</text>
</comment>
<comment type="similarity">
    <text evidence="3 4">Belongs to the cytochrome b family.</text>
</comment>
<comment type="caution">
    <text evidence="2">The full-length protein contains only eight transmembrane helices, not nine as predicted by bioinformatics tools.</text>
</comment>
<dbReference type="EMBL" id="AY926380">
    <property type="protein sequence ID" value="AAY23223.1"/>
    <property type="molecule type" value="Genomic_DNA"/>
</dbReference>
<dbReference type="SMR" id="Q508M3"/>
<dbReference type="GO" id="GO:0005743">
    <property type="term" value="C:mitochondrial inner membrane"/>
    <property type="evidence" value="ECO:0007669"/>
    <property type="project" value="UniProtKB-SubCell"/>
</dbReference>
<dbReference type="GO" id="GO:0045275">
    <property type="term" value="C:respiratory chain complex III"/>
    <property type="evidence" value="ECO:0007669"/>
    <property type="project" value="InterPro"/>
</dbReference>
<dbReference type="GO" id="GO:0046872">
    <property type="term" value="F:metal ion binding"/>
    <property type="evidence" value="ECO:0007669"/>
    <property type="project" value="UniProtKB-KW"/>
</dbReference>
<dbReference type="GO" id="GO:0008121">
    <property type="term" value="F:ubiquinol-cytochrome-c reductase activity"/>
    <property type="evidence" value="ECO:0007669"/>
    <property type="project" value="InterPro"/>
</dbReference>
<dbReference type="GO" id="GO:0006122">
    <property type="term" value="P:mitochondrial electron transport, ubiquinol to cytochrome c"/>
    <property type="evidence" value="ECO:0007669"/>
    <property type="project" value="TreeGrafter"/>
</dbReference>
<dbReference type="CDD" id="cd00290">
    <property type="entry name" value="cytochrome_b_C"/>
    <property type="match status" value="1"/>
</dbReference>
<dbReference type="CDD" id="cd00284">
    <property type="entry name" value="Cytochrome_b_N"/>
    <property type="match status" value="1"/>
</dbReference>
<dbReference type="FunFam" id="1.20.810.10:FF:000002">
    <property type="entry name" value="Cytochrome b"/>
    <property type="match status" value="1"/>
</dbReference>
<dbReference type="Gene3D" id="1.20.810.10">
    <property type="entry name" value="Cytochrome Bc1 Complex, Chain C"/>
    <property type="match status" value="1"/>
</dbReference>
<dbReference type="InterPro" id="IPR005798">
    <property type="entry name" value="Cyt_b/b6_C"/>
</dbReference>
<dbReference type="InterPro" id="IPR036150">
    <property type="entry name" value="Cyt_b/b6_C_sf"/>
</dbReference>
<dbReference type="InterPro" id="IPR005797">
    <property type="entry name" value="Cyt_b/b6_N"/>
</dbReference>
<dbReference type="InterPro" id="IPR027387">
    <property type="entry name" value="Cytb/b6-like_sf"/>
</dbReference>
<dbReference type="InterPro" id="IPR030689">
    <property type="entry name" value="Cytochrome_b"/>
</dbReference>
<dbReference type="InterPro" id="IPR048260">
    <property type="entry name" value="Cytochrome_b_C_euk/bac"/>
</dbReference>
<dbReference type="InterPro" id="IPR048259">
    <property type="entry name" value="Cytochrome_b_N_euk/bac"/>
</dbReference>
<dbReference type="InterPro" id="IPR016174">
    <property type="entry name" value="Di-haem_cyt_TM"/>
</dbReference>
<dbReference type="PANTHER" id="PTHR19271">
    <property type="entry name" value="CYTOCHROME B"/>
    <property type="match status" value="1"/>
</dbReference>
<dbReference type="PANTHER" id="PTHR19271:SF16">
    <property type="entry name" value="CYTOCHROME B"/>
    <property type="match status" value="1"/>
</dbReference>
<dbReference type="Pfam" id="PF00032">
    <property type="entry name" value="Cytochrom_B_C"/>
    <property type="match status" value="1"/>
</dbReference>
<dbReference type="Pfam" id="PF00033">
    <property type="entry name" value="Cytochrome_B"/>
    <property type="match status" value="1"/>
</dbReference>
<dbReference type="PIRSF" id="PIRSF038885">
    <property type="entry name" value="COB"/>
    <property type="match status" value="1"/>
</dbReference>
<dbReference type="SUPFAM" id="SSF81648">
    <property type="entry name" value="a domain/subunit of cytochrome bc1 complex (Ubiquinol-cytochrome c reductase)"/>
    <property type="match status" value="1"/>
</dbReference>
<dbReference type="SUPFAM" id="SSF81342">
    <property type="entry name" value="Transmembrane di-heme cytochromes"/>
    <property type="match status" value="1"/>
</dbReference>
<dbReference type="PROSITE" id="PS51003">
    <property type="entry name" value="CYTB_CTER"/>
    <property type="match status" value="1"/>
</dbReference>
<dbReference type="PROSITE" id="PS51002">
    <property type="entry name" value="CYTB_NTER"/>
    <property type="match status" value="1"/>
</dbReference>
<accession>Q508M3</accession>
<evidence type="ECO:0000250" key="1"/>
<evidence type="ECO:0000250" key="2">
    <source>
        <dbReference type="UniProtKB" id="P00157"/>
    </source>
</evidence>
<evidence type="ECO:0000255" key="3">
    <source>
        <dbReference type="PROSITE-ProRule" id="PRU00967"/>
    </source>
</evidence>
<evidence type="ECO:0000255" key="4">
    <source>
        <dbReference type="PROSITE-ProRule" id="PRU00968"/>
    </source>
</evidence>
<proteinExistence type="inferred from homology"/>
<name>CYB_DIPST</name>